<name>MUTS_FUSNN</name>
<dbReference type="EMBL" id="AE009951">
    <property type="protein sequence ID" value="AAL94889.1"/>
    <property type="molecule type" value="Genomic_DNA"/>
</dbReference>
<dbReference type="RefSeq" id="NP_603590.1">
    <property type="nucleotide sequence ID" value="NC_003454.1"/>
</dbReference>
<dbReference type="SMR" id="Q8RFK2"/>
<dbReference type="FunCoup" id="Q8RFK2">
    <property type="interactions" value="315"/>
</dbReference>
<dbReference type="STRING" id="190304.FN0693"/>
<dbReference type="PaxDb" id="190304-FN0693"/>
<dbReference type="EnsemblBacteria" id="AAL94889">
    <property type="protein sequence ID" value="AAL94889"/>
    <property type="gene ID" value="FN0693"/>
</dbReference>
<dbReference type="KEGG" id="fnu:FN0693"/>
<dbReference type="PATRIC" id="fig|190304.8.peg.1258"/>
<dbReference type="eggNOG" id="COG0249">
    <property type="taxonomic scope" value="Bacteria"/>
</dbReference>
<dbReference type="HOGENOM" id="CLU_002472_10_0_0"/>
<dbReference type="InParanoid" id="Q8RFK2"/>
<dbReference type="BioCyc" id="FNUC190304:G1FZS-1279-MONOMER"/>
<dbReference type="Proteomes" id="UP000002521">
    <property type="component" value="Chromosome"/>
</dbReference>
<dbReference type="GO" id="GO:0005829">
    <property type="term" value="C:cytosol"/>
    <property type="evidence" value="ECO:0000318"/>
    <property type="project" value="GO_Central"/>
</dbReference>
<dbReference type="GO" id="GO:0005524">
    <property type="term" value="F:ATP binding"/>
    <property type="evidence" value="ECO:0007669"/>
    <property type="project" value="UniProtKB-UniRule"/>
</dbReference>
<dbReference type="GO" id="GO:0140664">
    <property type="term" value="F:ATP-dependent DNA damage sensor activity"/>
    <property type="evidence" value="ECO:0007669"/>
    <property type="project" value="InterPro"/>
</dbReference>
<dbReference type="GO" id="GO:0003684">
    <property type="term" value="F:damaged DNA binding"/>
    <property type="evidence" value="ECO:0007669"/>
    <property type="project" value="UniProtKB-UniRule"/>
</dbReference>
<dbReference type="GO" id="GO:0030983">
    <property type="term" value="F:mismatched DNA binding"/>
    <property type="evidence" value="ECO:0000318"/>
    <property type="project" value="GO_Central"/>
</dbReference>
<dbReference type="GO" id="GO:0006298">
    <property type="term" value="P:mismatch repair"/>
    <property type="evidence" value="ECO:0000318"/>
    <property type="project" value="GO_Central"/>
</dbReference>
<dbReference type="CDD" id="cd03284">
    <property type="entry name" value="ABC_MutS1"/>
    <property type="match status" value="1"/>
</dbReference>
<dbReference type="FunFam" id="1.10.1420.10:FF:000007">
    <property type="entry name" value="DNA mismatch repair protein MutS"/>
    <property type="match status" value="1"/>
</dbReference>
<dbReference type="FunFam" id="3.40.1170.10:FF:000001">
    <property type="entry name" value="DNA mismatch repair protein MutS"/>
    <property type="match status" value="1"/>
</dbReference>
<dbReference type="Gene3D" id="1.10.1420.10">
    <property type="match status" value="2"/>
</dbReference>
<dbReference type="Gene3D" id="3.40.1170.10">
    <property type="entry name" value="DNA repair protein MutS, domain I"/>
    <property type="match status" value="1"/>
</dbReference>
<dbReference type="Gene3D" id="3.30.420.110">
    <property type="entry name" value="MutS, connector domain"/>
    <property type="match status" value="1"/>
</dbReference>
<dbReference type="Gene3D" id="3.40.50.300">
    <property type="entry name" value="P-loop containing nucleotide triphosphate hydrolases"/>
    <property type="match status" value="1"/>
</dbReference>
<dbReference type="HAMAP" id="MF_00096">
    <property type="entry name" value="MutS"/>
    <property type="match status" value="1"/>
</dbReference>
<dbReference type="InterPro" id="IPR005748">
    <property type="entry name" value="DNA_mismatch_repair_MutS"/>
</dbReference>
<dbReference type="InterPro" id="IPR007695">
    <property type="entry name" value="DNA_mismatch_repair_MutS-lik_N"/>
</dbReference>
<dbReference type="InterPro" id="IPR017261">
    <property type="entry name" value="DNA_mismatch_repair_MutS/MSH"/>
</dbReference>
<dbReference type="InterPro" id="IPR000432">
    <property type="entry name" value="DNA_mismatch_repair_MutS_C"/>
</dbReference>
<dbReference type="InterPro" id="IPR007861">
    <property type="entry name" value="DNA_mismatch_repair_MutS_clamp"/>
</dbReference>
<dbReference type="InterPro" id="IPR007696">
    <property type="entry name" value="DNA_mismatch_repair_MutS_core"/>
</dbReference>
<dbReference type="InterPro" id="IPR016151">
    <property type="entry name" value="DNA_mismatch_repair_MutS_N"/>
</dbReference>
<dbReference type="InterPro" id="IPR036187">
    <property type="entry name" value="DNA_mismatch_repair_MutS_sf"/>
</dbReference>
<dbReference type="InterPro" id="IPR007860">
    <property type="entry name" value="DNA_mmatch_repair_MutS_con_dom"/>
</dbReference>
<dbReference type="InterPro" id="IPR045076">
    <property type="entry name" value="MutS"/>
</dbReference>
<dbReference type="InterPro" id="IPR036678">
    <property type="entry name" value="MutS_con_dom_sf"/>
</dbReference>
<dbReference type="InterPro" id="IPR027417">
    <property type="entry name" value="P-loop_NTPase"/>
</dbReference>
<dbReference type="NCBIfam" id="TIGR01070">
    <property type="entry name" value="mutS1"/>
    <property type="match status" value="1"/>
</dbReference>
<dbReference type="NCBIfam" id="NF003810">
    <property type="entry name" value="PRK05399.1"/>
    <property type="match status" value="1"/>
</dbReference>
<dbReference type="PANTHER" id="PTHR11361:SF34">
    <property type="entry name" value="DNA MISMATCH REPAIR PROTEIN MSH1, MITOCHONDRIAL"/>
    <property type="match status" value="1"/>
</dbReference>
<dbReference type="PANTHER" id="PTHR11361">
    <property type="entry name" value="DNA MISMATCH REPAIR PROTEIN MUTS FAMILY MEMBER"/>
    <property type="match status" value="1"/>
</dbReference>
<dbReference type="Pfam" id="PF01624">
    <property type="entry name" value="MutS_I"/>
    <property type="match status" value="1"/>
</dbReference>
<dbReference type="Pfam" id="PF05188">
    <property type="entry name" value="MutS_II"/>
    <property type="match status" value="1"/>
</dbReference>
<dbReference type="Pfam" id="PF05192">
    <property type="entry name" value="MutS_III"/>
    <property type="match status" value="1"/>
</dbReference>
<dbReference type="Pfam" id="PF05190">
    <property type="entry name" value="MutS_IV"/>
    <property type="match status" value="1"/>
</dbReference>
<dbReference type="Pfam" id="PF00488">
    <property type="entry name" value="MutS_V"/>
    <property type="match status" value="1"/>
</dbReference>
<dbReference type="PIRSF" id="PIRSF037677">
    <property type="entry name" value="DNA_mis_repair_Msh6"/>
    <property type="match status" value="1"/>
</dbReference>
<dbReference type="SMART" id="SM00534">
    <property type="entry name" value="MUTSac"/>
    <property type="match status" value="1"/>
</dbReference>
<dbReference type="SMART" id="SM00533">
    <property type="entry name" value="MUTSd"/>
    <property type="match status" value="1"/>
</dbReference>
<dbReference type="SUPFAM" id="SSF55271">
    <property type="entry name" value="DNA repair protein MutS, domain I"/>
    <property type="match status" value="1"/>
</dbReference>
<dbReference type="SUPFAM" id="SSF53150">
    <property type="entry name" value="DNA repair protein MutS, domain II"/>
    <property type="match status" value="1"/>
</dbReference>
<dbReference type="SUPFAM" id="SSF48334">
    <property type="entry name" value="DNA repair protein MutS, domain III"/>
    <property type="match status" value="1"/>
</dbReference>
<dbReference type="SUPFAM" id="SSF52540">
    <property type="entry name" value="P-loop containing nucleoside triphosphate hydrolases"/>
    <property type="match status" value="1"/>
</dbReference>
<dbReference type="PROSITE" id="PS00486">
    <property type="entry name" value="DNA_MISMATCH_REPAIR_2"/>
    <property type="match status" value="1"/>
</dbReference>
<accession>Q8RFK2</accession>
<evidence type="ECO:0000255" key="1">
    <source>
        <dbReference type="HAMAP-Rule" id="MF_00096"/>
    </source>
</evidence>
<organism>
    <name type="scientific">Fusobacterium nucleatum subsp. nucleatum (strain ATCC 25586 / DSM 15643 / BCRC 10681 / CIP 101130 / JCM 8532 / KCTC 2640 / LMG 13131 / VPI 4355)</name>
    <dbReference type="NCBI Taxonomy" id="190304"/>
    <lineage>
        <taxon>Bacteria</taxon>
        <taxon>Fusobacteriati</taxon>
        <taxon>Fusobacteriota</taxon>
        <taxon>Fusobacteriia</taxon>
        <taxon>Fusobacteriales</taxon>
        <taxon>Fusobacteriaceae</taxon>
        <taxon>Fusobacterium</taxon>
    </lineage>
</organism>
<sequence>MLKYISYSEKRKIKLRGIKMSADTPLMQQYKKIKEEYQNEILMFRLGDFYEMFFEDAKIASKELGLTLTKRNREKGQDVPLAGVPYHSVASYIAKLVEKGYSVAICDQVEDPKSATGIVKREVTRVITPGTIIDVDFLDKNNNNYIACIKINTTENIVAIAYTDITTGEFSVFEIKGKNFFEKALAEMNKIQASEILLDEKTYSEYIEILKEKISFLGVKFTEVPNVRKAESYLTSYFDIMSIEVFSLKSKDLAISTSANLLHYIDELQKGNELPFSKIEYKNIDNIMELNISTQNNLNLVPKRNEEAKGTLLGVLDNCVTSVGSRELKKIIKNPFLDIEKIKQRQFYVDYFYNDVLLRENIREYLKDIYDVERIAGKIIYGTENGKDLLSLKESIRKSLETYKVLKEHQEIKDILDIDVKILLDIYNKIELIINIEAPFSVREGGIIKDGYNSELDKLRKISKLGKDFILEIEQRERERTGIKGLKIKYNKVFGYFIEVTKANEHLVPEDYIRKQTLVNSERYIVPDLKEYEEKVITAKSKIEALEYELFKQLTSEIKGHIDSLYKLANRIANLDIVSNFAHIATKNSYVKPEIGDGDILEIKGGRHPIVESLIPSGTYVKNDIILDDKNNLIILTGPNMSGKSTYMKQVALNIIMAHIGSYVAADCAKIPIVDKIFTRVGASDDLLTGQSTFMLEMTEVASILNNATNKSFIVLDEIGRGTSTYDGISIATAITEYIHNNIGAKTIFATHYHELTELEKELERAINFRVEVKEDGKNVVFLREIVKGGADKSYGIEVARLSGVPKEVLNRSNKILKKLETRKNLIENKIKAEQMILFGNGFEEENEEEETEILSENESKVLELLKNMDLNSLSPLESLLKLNELKKILIGGTDE</sequence>
<gene>
    <name evidence="1" type="primary">mutS</name>
    <name type="ordered locus">FN0693</name>
</gene>
<proteinExistence type="inferred from homology"/>
<feature type="chain" id="PRO_0000115098" description="DNA mismatch repair protein MutS">
    <location>
        <begin position="1"/>
        <end position="896"/>
    </location>
</feature>
<feature type="binding site" evidence="1">
    <location>
        <begin position="638"/>
        <end position="645"/>
    </location>
    <ligand>
        <name>ATP</name>
        <dbReference type="ChEBI" id="CHEBI:30616"/>
    </ligand>
</feature>
<keyword id="KW-0067">ATP-binding</keyword>
<keyword id="KW-0227">DNA damage</keyword>
<keyword id="KW-0234">DNA repair</keyword>
<keyword id="KW-0238">DNA-binding</keyword>
<keyword id="KW-0547">Nucleotide-binding</keyword>
<keyword id="KW-1185">Reference proteome</keyword>
<protein>
    <recommendedName>
        <fullName evidence="1">DNA mismatch repair protein MutS</fullName>
    </recommendedName>
</protein>
<reference key="1">
    <citation type="journal article" date="2002" name="J. Bacteriol.">
        <title>Genome sequence and analysis of the oral bacterium Fusobacterium nucleatum strain ATCC 25586.</title>
        <authorList>
            <person name="Kapatral V."/>
            <person name="Anderson I."/>
            <person name="Ivanova N."/>
            <person name="Reznik G."/>
            <person name="Los T."/>
            <person name="Lykidis A."/>
            <person name="Bhattacharyya A."/>
            <person name="Bartman A."/>
            <person name="Gardner W."/>
            <person name="Grechkin G."/>
            <person name="Zhu L."/>
            <person name="Vasieva O."/>
            <person name="Chu L."/>
            <person name="Kogan Y."/>
            <person name="Chaga O."/>
            <person name="Goltsman E."/>
            <person name="Bernal A."/>
            <person name="Larsen N."/>
            <person name="D'Souza M."/>
            <person name="Walunas T."/>
            <person name="Pusch G."/>
            <person name="Haselkorn R."/>
            <person name="Fonstein M."/>
            <person name="Kyrpides N.C."/>
            <person name="Overbeek R."/>
        </authorList>
    </citation>
    <scope>NUCLEOTIDE SEQUENCE [LARGE SCALE GENOMIC DNA]</scope>
    <source>
        <strain>ATCC 25586 / DSM 15643 / BCRC 10681 / CIP 101130 / JCM 8532 / KCTC 2640 / LMG 13131 / VPI 4355</strain>
    </source>
</reference>
<comment type="function">
    <text evidence="1">This protein is involved in the repair of mismatches in DNA. It is possible that it carries out the mismatch recognition step. This protein has a weak ATPase activity.</text>
</comment>
<comment type="similarity">
    <text evidence="1">Belongs to the DNA mismatch repair MutS family.</text>
</comment>